<keyword id="KW-1003">Cell membrane</keyword>
<keyword id="KW-1015">Disulfide bond</keyword>
<keyword id="KW-0297">G-protein coupled receptor</keyword>
<keyword id="KW-0325">Glycoprotein</keyword>
<keyword id="KW-0472">Membrane</keyword>
<keyword id="KW-0552">Olfaction</keyword>
<keyword id="KW-0675">Receptor</keyword>
<keyword id="KW-1185">Reference proteome</keyword>
<keyword id="KW-0716">Sensory transduction</keyword>
<keyword id="KW-0807">Transducer</keyword>
<keyword id="KW-0812">Transmembrane</keyword>
<keyword id="KW-1133">Transmembrane helix</keyword>
<reference key="1">
    <citation type="book" date="2000" name="Major histocompatibility complex-evolution, structure, and function">
        <title>Polymorphic olfactory receptor genes and HLA loci constitute extended haplotypes.</title>
        <editorList>
            <person name="Kasahara M."/>
        </editorList>
        <authorList>
            <person name="Ziegler A."/>
            <person name="Ehlers A."/>
            <person name="Forbes S.A."/>
            <person name="Trowsdale J."/>
            <person name="Uchanska-Ziegler B."/>
            <person name="Volz A."/>
            <person name="Younger R."/>
            <person name="Beck S."/>
        </authorList>
    </citation>
    <scope>NUCLEOTIDE SEQUENCE [GENOMIC DNA]</scope>
    <scope>VARIANT ASN-63</scope>
</reference>
<reference key="2">
    <citation type="journal article" date="2003" name="J. Biol. Chem.">
        <title>Complex transcription and splicing of odorant receptor genes.</title>
        <authorList>
            <person name="Volz A."/>
            <person name="Ehlers A."/>
            <person name="Younger R."/>
            <person name="Forbes S."/>
            <person name="Trowsdale J."/>
            <person name="Schnorr D."/>
            <person name="Beck S."/>
            <person name="Ziegler A."/>
        </authorList>
    </citation>
    <scope>NUCLEOTIDE SEQUENCE [MRNA]</scope>
    <source>
        <tissue>Testis</tissue>
    </source>
</reference>
<reference key="3">
    <citation type="journal article" date="2004" name="Nat. Genet.">
        <title>Complete sequencing and characterization of 21,243 full-length human cDNAs.</title>
        <authorList>
            <person name="Ota T."/>
            <person name="Suzuki Y."/>
            <person name="Nishikawa T."/>
            <person name="Otsuki T."/>
            <person name="Sugiyama T."/>
            <person name="Irie R."/>
            <person name="Wakamatsu A."/>
            <person name="Hayashi K."/>
            <person name="Sato H."/>
            <person name="Nagai K."/>
            <person name="Kimura K."/>
            <person name="Makita H."/>
            <person name="Sekine M."/>
            <person name="Obayashi M."/>
            <person name="Nishi T."/>
            <person name="Shibahara T."/>
            <person name="Tanaka T."/>
            <person name="Ishii S."/>
            <person name="Yamamoto J."/>
            <person name="Saito K."/>
            <person name="Kawai Y."/>
            <person name="Isono Y."/>
            <person name="Nakamura Y."/>
            <person name="Nagahari K."/>
            <person name="Murakami K."/>
            <person name="Yasuda T."/>
            <person name="Iwayanagi T."/>
            <person name="Wagatsuma M."/>
            <person name="Shiratori A."/>
            <person name="Sudo H."/>
            <person name="Hosoiri T."/>
            <person name="Kaku Y."/>
            <person name="Kodaira H."/>
            <person name="Kondo H."/>
            <person name="Sugawara M."/>
            <person name="Takahashi M."/>
            <person name="Kanda K."/>
            <person name="Yokoi T."/>
            <person name="Furuya T."/>
            <person name="Kikkawa E."/>
            <person name="Omura Y."/>
            <person name="Abe K."/>
            <person name="Kamihara K."/>
            <person name="Katsuta N."/>
            <person name="Sato K."/>
            <person name="Tanikawa M."/>
            <person name="Yamazaki M."/>
            <person name="Ninomiya K."/>
            <person name="Ishibashi T."/>
            <person name="Yamashita H."/>
            <person name="Murakawa K."/>
            <person name="Fujimori K."/>
            <person name="Tanai H."/>
            <person name="Kimata M."/>
            <person name="Watanabe M."/>
            <person name="Hiraoka S."/>
            <person name="Chiba Y."/>
            <person name="Ishida S."/>
            <person name="Ono Y."/>
            <person name="Takiguchi S."/>
            <person name="Watanabe S."/>
            <person name="Yosida M."/>
            <person name="Hotuta T."/>
            <person name="Kusano J."/>
            <person name="Kanehori K."/>
            <person name="Takahashi-Fujii A."/>
            <person name="Hara H."/>
            <person name="Tanase T.-O."/>
            <person name="Nomura Y."/>
            <person name="Togiya S."/>
            <person name="Komai F."/>
            <person name="Hara R."/>
            <person name="Takeuchi K."/>
            <person name="Arita M."/>
            <person name="Imose N."/>
            <person name="Musashino K."/>
            <person name="Yuuki H."/>
            <person name="Oshima A."/>
            <person name="Sasaki N."/>
            <person name="Aotsuka S."/>
            <person name="Yoshikawa Y."/>
            <person name="Matsunawa H."/>
            <person name="Ichihara T."/>
            <person name="Shiohata N."/>
            <person name="Sano S."/>
            <person name="Moriya S."/>
            <person name="Momiyama H."/>
            <person name="Satoh N."/>
            <person name="Takami S."/>
            <person name="Terashima Y."/>
            <person name="Suzuki O."/>
            <person name="Nakagawa S."/>
            <person name="Senoh A."/>
            <person name="Mizoguchi H."/>
            <person name="Goto Y."/>
            <person name="Shimizu F."/>
            <person name="Wakebe H."/>
            <person name="Hishigaki H."/>
            <person name="Watanabe T."/>
            <person name="Sugiyama A."/>
            <person name="Takemoto M."/>
            <person name="Kawakami B."/>
            <person name="Yamazaki M."/>
            <person name="Watanabe K."/>
            <person name="Kumagai A."/>
            <person name="Itakura S."/>
            <person name="Fukuzumi Y."/>
            <person name="Fujimori Y."/>
            <person name="Komiyama M."/>
            <person name="Tashiro H."/>
            <person name="Tanigami A."/>
            <person name="Fujiwara T."/>
            <person name="Ono T."/>
            <person name="Yamada K."/>
            <person name="Fujii Y."/>
            <person name="Ozaki K."/>
            <person name="Hirao M."/>
            <person name="Ohmori Y."/>
            <person name="Kawabata A."/>
            <person name="Hikiji T."/>
            <person name="Kobatake N."/>
            <person name="Inagaki H."/>
            <person name="Ikema Y."/>
            <person name="Okamoto S."/>
            <person name="Okitani R."/>
            <person name="Kawakami T."/>
            <person name="Noguchi S."/>
            <person name="Itoh T."/>
            <person name="Shigeta K."/>
            <person name="Senba T."/>
            <person name="Matsumura K."/>
            <person name="Nakajima Y."/>
            <person name="Mizuno T."/>
            <person name="Morinaga M."/>
            <person name="Sasaki M."/>
            <person name="Togashi T."/>
            <person name="Oyama M."/>
            <person name="Hata H."/>
            <person name="Watanabe M."/>
            <person name="Komatsu T."/>
            <person name="Mizushima-Sugano J."/>
            <person name="Satoh T."/>
            <person name="Shirai Y."/>
            <person name="Takahashi Y."/>
            <person name="Nakagawa K."/>
            <person name="Okumura K."/>
            <person name="Nagase T."/>
            <person name="Nomura N."/>
            <person name="Kikuchi H."/>
            <person name="Masuho Y."/>
            <person name="Yamashita R."/>
            <person name="Nakai K."/>
            <person name="Yada T."/>
            <person name="Nakamura Y."/>
            <person name="Ohara O."/>
            <person name="Isogai T."/>
            <person name="Sugano S."/>
        </authorList>
    </citation>
    <scope>NUCLEOTIDE SEQUENCE [LARGE SCALE MRNA]</scope>
    <source>
        <tissue>Testis</tissue>
    </source>
</reference>
<reference key="4">
    <citation type="journal article" date="2003" name="Nature">
        <title>The DNA sequence and analysis of human chromosome 6.</title>
        <authorList>
            <person name="Mungall A.J."/>
            <person name="Palmer S.A."/>
            <person name="Sims S.K."/>
            <person name="Edwards C.A."/>
            <person name="Ashurst J.L."/>
            <person name="Wilming L."/>
            <person name="Jones M.C."/>
            <person name="Horton R."/>
            <person name="Hunt S.E."/>
            <person name="Scott C.E."/>
            <person name="Gilbert J.G.R."/>
            <person name="Clamp M.E."/>
            <person name="Bethel G."/>
            <person name="Milne S."/>
            <person name="Ainscough R."/>
            <person name="Almeida J.P."/>
            <person name="Ambrose K.D."/>
            <person name="Andrews T.D."/>
            <person name="Ashwell R.I.S."/>
            <person name="Babbage A.K."/>
            <person name="Bagguley C.L."/>
            <person name="Bailey J."/>
            <person name="Banerjee R."/>
            <person name="Barker D.J."/>
            <person name="Barlow K.F."/>
            <person name="Bates K."/>
            <person name="Beare D.M."/>
            <person name="Beasley H."/>
            <person name="Beasley O."/>
            <person name="Bird C.P."/>
            <person name="Blakey S.E."/>
            <person name="Bray-Allen S."/>
            <person name="Brook J."/>
            <person name="Brown A.J."/>
            <person name="Brown J.Y."/>
            <person name="Burford D.C."/>
            <person name="Burrill W."/>
            <person name="Burton J."/>
            <person name="Carder C."/>
            <person name="Carter N.P."/>
            <person name="Chapman J.C."/>
            <person name="Clark S.Y."/>
            <person name="Clark G."/>
            <person name="Clee C.M."/>
            <person name="Clegg S."/>
            <person name="Cobley V."/>
            <person name="Collier R.E."/>
            <person name="Collins J.E."/>
            <person name="Colman L.K."/>
            <person name="Corby N.R."/>
            <person name="Coville G.J."/>
            <person name="Culley K.M."/>
            <person name="Dhami P."/>
            <person name="Davies J."/>
            <person name="Dunn M."/>
            <person name="Earthrowl M.E."/>
            <person name="Ellington A.E."/>
            <person name="Evans K.A."/>
            <person name="Faulkner L."/>
            <person name="Francis M.D."/>
            <person name="Frankish A."/>
            <person name="Frankland J."/>
            <person name="French L."/>
            <person name="Garner P."/>
            <person name="Garnett J."/>
            <person name="Ghori M.J."/>
            <person name="Gilby L.M."/>
            <person name="Gillson C.J."/>
            <person name="Glithero R.J."/>
            <person name="Grafham D.V."/>
            <person name="Grant M."/>
            <person name="Gribble S."/>
            <person name="Griffiths C."/>
            <person name="Griffiths M.N.D."/>
            <person name="Hall R."/>
            <person name="Halls K.S."/>
            <person name="Hammond S."/>
            <person name="Harley J.L."/>
            <person name="Hart E.A."/>
            <person name="Heath P.D."/>
            <person name="Heathcott R."/>
            <person name="Holmes S.J."/>
            <person name="Howden P.J."/>
            <person name="Howe K.L."/>
            <person name="Howell G.R."/>
            <person name="Huckle E."/>
            <person name="Humphray S.J."/>
            <person name="Humphries M.D."/>
            <person name="Hunt A.R."/>
            <person name="Johnson C.M."/>
            <person name="Joy A.A."/>
            <person name="Kay M."/>
            <person name="Keenan S.J."/>
            <person name="Kimberley A.M."/>
            <person name="King A."/>
            <person name="Laird G.K."/>
            <person name="Langford C."/>
            <person name="Lawlor S."/>
            <person name="Leongamornlert D.A."/>
            <person name="Leversha M."/>
            <person name="Lloyd C.R."/>
            <person name="Lloyd D.M."/>
            <person name="Loveland J.E."/>
            <person name="Lovell J."/>
            <person name="Martin S."/>
            <person name="Mashreghi-Mohammadi M."/>
            <person name="Maslen G.L."/>
            <person name="Matthews L."/>
            <person name="McCann O.T."/>
            <person name="McLaren S.J."/>
            <person name="McLay K."/>
            <person name="McMurray A."/>
            <person name="Moore M.J.F."/>
            <person name="Mullikin J.C."/>
            <person name="Niblett D."/>
            <person name="Nickerson T."/>
            <person name="Novik K.L."/>
            <person name="Oliver K."/>
            <person name="Overton-Larty E.K."/>
            <person name="Parker A."/>
            <person name="Patel R."/>
            <person name="Pearce A.V."/>
            <person name="Peck A.I."/>
            <person name="Phillimore B.J.C.T."/>
            <person name="Phillips S."/>
            <person name="Plumb R.W."/>
            <person name="Porter K.M."/>
            <person name="Ramsey Y."/>
            <person name="Ranby S.A."/>
            <person name="Rice C.M."/>
            <person name="Ross M.T."/>
            <person name="Searle S.M."/>
            <person name="Sehra H.K."/>
            <person name="Sheridan E."/>
            <person name="Skuce C.D."/>
            <person name="Smith S."/>
            <person name="Smith M."/>
            <person name="Spraggon L."/>
            <person name="Squares S.L."/>
            <person name="Steward C.A."/>
            <person name="Sycamore N."/>
            <person name="Tamlyn-Hall G."/>
            <person name="Tester J."/>
            <person name="Theaker A.J."/>
            <person name="Thomas D.W."/>
            <person name="Thorpe A."/>
            <person name="Tracey A."/>
            <person name="Tromans A."/>
            <person name="Tubby B."/>
            <person name="Wall M."/>
            <person name="Wallis J.M."/>
            <person name="West A.P."/>
            <person name="White S.S."/>
            <person name="Whitehead S.L."/>
            <person name="Whittaker H."/>
            <person name="Wild A."/>
            <person name="Willey D.J."/>
            <person name="Wilmer T.E."/>
            <person name="Wood J.M."/>
            <person name="Wray P.W."/>
            <person name="Wyatt J.C."/>
            <person name="Young L."/>
            <person name="Younger R.M."/>
            <person name="Bentley D.R."/>
            <person name="Coulson A."/>
            <person name="Durbin R.M."/>
            <person name="Hubbard T."/>
            <person name="Sulston J.E."/>
            <person name="Dunham I."/>
            <person name="Rogers J."/>
            <person name="Beck S."/>
        </authorList>
    </citation>
    <scope>NUCLEOTIDE SEQUENCE [LARGE SCALE GENOMIC DNA]</scope>
</reference>
<reference key="5">
    <citation type="submission" date="2005-07" db="EMBL/GenBank/DDBJ databases">
        <authorList>
            <person name="Mural R.J."/>
            <person name="Istrail S."/>
            <person name="Sutton G."/>
            <person name="Florea L."/>
            <person name="Halpern A.L."/>
            <person name="Mobarry C.M."/>
            <person name="Lippert R."/>
            <person name="Walenz B."/>
            <person name="Shatkay H."/>
            <person name="Dew I."/>
            <person name="Miller J.R."/>
            <person name="Flanigan M.J."/>
            <person name="Edwards N.J."/>
            <person name="Bolanos R."/>
            <person name="Fasulo D."/>
            <person name="Halldorsson B.V."/>
            <person name="Hannenhalli S."/>
            <person name="Turner R."/>
            <person name="Yooseph S."/>
            <person name="Lu F."/>
            <person name="Nusskern D.R."/>
            <person name="Shue B.C."/>
            <person name="Zheng X.H."/>
            <person name="Zhong F."/>
            <person name="Delcher A.L."/>
            <person name="Huson D.H."/>
            <person name="Kravitz S.A."/>
            <person name="Mouchard L."/>
            <person name="Reinert K."/>
            <person name="Remington K.A."/>
            <person name="Clark A.G."/>
            <person name="Waterman M.S."/>
            <person name="Eichler E.E."/>
            <person name="Adams M.D."/>
            <person name="Hunkapiller M.W."/>
            <person name="Myers E.W."/>
            <person name="Venter J.C."/>
        </authorList>
    </citation>
    <scope>NUCLEOTIDE SEQUENCE [LARGE SCALE GENOMIC DNA]</scope>
</reference>
<reference key="6">
    <citation type="journal article" date="2004" name="Genome Res.">
        <title>The status, quality, and expansion of the NIH full-length cDNA project: the Mammalian Gene Collection (MGC).</title>
        <authorList>
            <consortium name="The MGC Project Team"/>
        </authorList>
    </citation>
    <scope>NUCLEOTIDE SEQUENCE [LARGE SCALE MRNA]</scope>
    <source>
        <tissue>Testis</tissue>
    </source>
</reference>
<reference key="7">
    <citation type="submission" date="1998-01" db="EMBL/GenBank/DDBJ databases">
        <title>Olfactory receptor gene cluster in man and mouse major histocompatibility complex.</title>
        <authorList>
            <person name="Gallinaro H."/>
        </authorList>
    </citation>
    <scope>NUCLEOTIDE SEQUENCE [GENOMIC DNA] OF 58-251</scope>
</reference>
<reference key="8">
    <citation type="submission" date="1998-02" db="EMBL/GenBank/DDBJ databases">
        <title>Olfactory receptor gene cluster in man and mouse major histocompatibility complex.</title>
        <authorList>
            <person name="Amadou C."/>
            <person name="Avoustin P."/>
            <person name="Ribouchon M.-T."/>
            <person name="Bouissou C."/>
            <person name="Tazi-Ahnini R."/>
            <person name="Ayer C."/>
            <person name="Pontarotti P."/>
        </authorList>
    </citation>
    <scope>NUCLEOTIDE SEQUENCE [GENOMIC DNA] OF 58-251</scope>
</reference>
<reference key="9">
    <citation type="journal article" date="2004" name="Proc. Natl. Acad. Sci. U.S.A.">
        <title>The human olfactory receptor gene family.</title>
        <authorList>
            <person name="Malnic B."/>
            <person name="Godfrey P.A."/>
            <person name="Buck L.B."/>
        </authorList>
    </citation>
    <scope>IDENTIFICATION</scope>
</reference>
<reference key="10">
    <citation type="journal article" date="2004" name="Proc. Natl. Acad. Sci. U.S.A.">
        <authorList>
            <person name="Malnic B."/>
            <person name="Godfrey P.A."/>
            <person name="Buck L.B."/>
        </authorList>
    </citation>
    <scope>ERRATUM OF PUBMED:14983052</scope>
</reference>
<proteinExistence type="evidence at transcript level"/>
<protein>
    <recommendedName>
        <fullName>Olfactory receptor 2H1</fullName>
    </recommendedName>
    <alternativeName>
        <fullName>Hs6M1-16</fullName>
    </alternativeName>
    <alternativeName>
        <fullName>OLFR42A-9004.14/9026.2</fullName>
    </alternativeName>
    <alternativeName>
        <fullName>Olfactory receptor 2H6</fullName>
    </alternativeName>
    <alternativeName>
        <fullName>Olfactory receptor 2H8</fullName>
    </alternativeName>
    <alternativeName>
        <fullName>Olfactory receptor 6-2</fullName>
        <shortName>OR6-2</shortName>
    </alternativeName>
    <alternativeName>
        <fullName>Olfactory receptor OR6-32</fullName>
    </alternativeName>
</protein>
<comment type="function">
    <text evidence="4">Odorant receptor.</text>
</comment>
<comment type="subcellular location">
    <subcellularLocation>
        <location>Cell membrane</location>
        <topology>Multi-pass membrane protein</topology>
    </subcellularLocation>
</comment>
<comment type="similarity">
    <text evidence="2">Belongs to the G-protein coupled receptor 1 family.</text>
</comment>
<comment type="online information" name="Human Olfactory Receptor Data Exploratorium (HORDE)">
    <link uri="http://genome.weizmann.ac.il/horde/card/index/symbol:OR2H1"/>
</comment>
<accession>Q9GZK4</accession>
<accession>B0S7T4</accession>
<accession>O43629</accession>
<accession>O43661</accession>
<accession>O43662</accession>
<accession>Q5SUN6</accession>
<accession>Q9GZK9</accession>
<evidence type="ECO:0000255" key="1"/>
<evidence type="ECO:0000255" key="2">
    <source>
        <dbReference type="PROSITE-ProRule" id="PRU00521"/>
    </source>
</evidence>
<evidence type="ECO:0000269" key="3">
    <source ref="1"/>
</evidence>
<evidence type="ECO:0000305" key="4"/>
<dbReference type="EMBL" id="AJ302604">
    <property type="protein sequence ID" value="CAC20524.1"/>
    <property type="molecule type" value="Genomic_DNA"/>
</dbReference>
<dbReference type="EMBL" id="AJ302605">
    <property type="protein sequence ID" value="CAC20525.1"/>
    <property type="molecule type" value="Genomic_DNA"/>
</dbReference>
<dbReference type="EMBL" id="AJ302606">
    <property type="protein sequence ID" value="CAC20526.1"/>
    <property type="molecule type" value="Genomic_DNA"/>
</dbReference>
<dbReference type="EMBL" id="AJ302607">
    <property type="protein sequence ID" value="CAC20527.1"/>
    <property type="molecule type" value="Genomic_DNA"/>
</dbReference>
<dbReference type="EMBL" id="AJ302608">
    <property type="protein sequence ID" value="CAC20528.1"/>
    <property type="molecule type" value="Genomic_DNA"/>
</dbReference>
<dbReference type="EMBL" id="AJ302609">
    <property type="protein sequence ID" value="CAC20529.1"/>
    <property type="molecule type" value="Genomic_DNA"/>
</dbReference>
<dbReference type="EMBL" id="AJ302610">
    <property type="protein sequence ID" value="CAC20530.1"/>
    <property type="molecule type" value="Genomic_DNA"/>
</dbReference>
<dbReference type="EMBL" id="AJ302611">
    <property type="protein sequence ID" value="CAC20531.1"/>
    <property type="molecule type" value="Genomic_DNA"/>
</dbReference>
<dbReference type="EMBL" id="AJ302612">
    <property type="protein sequence ID" value="CAC20532.1"/>
    <property type="molecule type" value="Genomic_DNA"/>
</dbReference>
<dbReference type="EMBL" id="AJ302613">
    <property type="protein sequence ID" value="CAC20533.1"/>
    <property type="molecule type" value="Genomic_DNA"/>
</dbReference>
<dbReference type="EMBL" id="AJ459847">
    <property type="protein sequence ID" value="CAD31039.1"/>
    <property type="molecule type" value="mRNA"/>
</dbReference>
<dbReference type="EMBL" id="AK127984">
    <property type="protein sequence ID" value="BAG54612.1"/>
    <property type="molecule type" value="mRNA"/>
</dbReference>
<dbReference type="EMBL" id="AL035542">
    <property type="protein sequence ID" value="CAB44506.1"/>
    <property type="molecule type" value="Genomic_DNA"/>
</dbReference>
<dbReference type="EMBL" id="AL645927">
    <property type="status" value="NOT_ANNOTATED_CDS"/>
    <property type="molecule type" value="Genomic_DNA"/>
</dbReference>
<dbReference type="EMBL" id="AL662869">
    <property type="status" value="NOT_ANNOTATED_CDS"/>
    <property type="molecule type" value="Genomic_DNA"/>
</dbReference>
<dbReference type="EMBL" id="BX000531">
    <property type="status" value="NOT_ANNOTATED_CDS"/>
    <property type="molecule type" value="Genomic_DNA"/>
</dbReference>
<dbReference type="EMBL" id="BX247947">
    <property type="status" value="NOT_ANNOTATED_CDS"/>
    <property type="molecule type" value="Genomic_DNA"/>
</dbReference>
<dbReference type="EMBL" id="CR759956">
    <property type="status" value="NOT_ANNOTATED_CDS"/>
    <property type="molecule type" value="Genomic_DNA"/>
</dbReference>
<dbReference type="EMBL" id="CR759768">
    <property type="status" value="NOT_ANNOTATED_CDS"/>
    <property type="molecule type" value="Genomic_DNA"/>
</dbReference>
<dbReference type="EMBL" id="BX927133">
    <property type="status" value="NOT_ANNOTATED_CDS"/>
    <property type="molecule type" value="Genomic_DNA"/>
</dbReference>
<dbReference type="EMBL" id="CR388393">
    <property type="status" value="NOT_ANNOTATED_CDS"/>
    <property type="molecule type" value="Genomic_DNA"/>
</dbReference>
<dbReference type="EMBL" id="CH471081">
    <property type="protein sequence ID" value="EAX03195.1"/>
    <property type="molecule type" value="Genomic_DNA"/>
</dbReference>
<dbReference type="EMBL" id="BC048991">
    <property type="protein sequence ID" value="AAH48991.1"/>
    <property type="molecule type" value="mRNA"/>
</dbReference>
<dbReference type="EMBL" id="AF042078">
    <property type="protein sequence ID" value="AAC00184.1"/>
    <property type="molecule type" value="Genomic_DNA"/>
</dbReference>
<dbReference type="EMBL" id="AF044491">
    <property type="protein sequence ID" value="AAC00188.1"/>
    <property type="molecule type" value="Genomic_DNA"/>
</dbReference>
<dbReference type="EMBL" id="AF044492">
    <property type="protein sequence ID" value="AAC00189.1"/>
    <property type="molecule type" value="Genomic_DNA"/>
</dbReference>
<dbReference type="EMBL" id="BK004209">
    <property type="protein sequence ID" value="DAA04607.1"/>
    <property type="molecule type" value="Genomic_DNA"/>
</dbReference>
<dbReference type="CCDS" id="CCDS4660.1"/>
<dbReference type="RefSeq" id="NP_001304943.1">
    <property type="nucleotide sequence ID" value="NM_001318014.2"/>
</dbReference>
<dbReference type="RefSeq" id="NP_001304951.1">
    <property type="nucleotide sequence ID" value="NM_001318022.2"/>
</dbReference>
<dbReference type="RefSeq" id="NP_112145.1">
    <property type="nucleotide sequence ID" value="NM_030883.5"/>
</dbReference>
<dbReference type="RefSeq" id="XP_011512772.1">
    <property type="nucleotide sequence ID" value="XM_011514470.2"/>
</dbReference>
<dbReference type="RefSeq" id="XP_011512774.1">
    <property type="nucleotide sequence ID" value="XM_011514472.2"/>
</dbReference>
<dbReference type="RefSeq" id="XP_011512775.1">
    <property type="nucleotide sequence ID" value="XM_011514473.2"/>
</dbReference>
<dbReference type="RefSeq" id="XP_011512781.1">
    <property type="nucleotide sequence ID" value="XM_011514479.2"/>
</dbReference>
<dbReference type="RefSeq" id="XP_011512785.1">
    <property type="nucleotide sequence ID" value="XM_011514483.2"/>
</dbReference>
<dbReference type="RefSeq" id="XP_011512786.1">
    <property type="nucleotide sequence ID" value="XM_011514484.2"/>
</dbReference>
<dbReference type="RefSeq" id="XP_016866226.1">
    <property type="nucleotide sequence ID" value="XM_017010737.1"/>
</dbReference>
<dbReference type="RefSeq" id="XP_016866227.1">
    <property type="nucleotide sequence ID" value="XM_017010738.1"/>
</dbReference>
<dbReference type="RefSeq" id="XP_016866228.1">
    <property type="nucleotide sequence ID" value="XM_017010739.2"/>
</dbReference>
<dbReference type="RefSeq" id="XP_047274596.1">
    <property type="nucleotide sequence ID" value="XM_047418640.1"/>
</dbReference>
<dbReference type="RefSeq" id="XP_047274597.1">
    <property type="nucleotide sequence ID" value="XM_047418641.1"/>
</dbReference>
<dbReference type="RefSeq" id="XP_047274598.1">
    <property type="nucleotide sequence ID" value="XM_047418642.1"/>
</dbReference>
<dbReference type="RefSeq" id="XP_047274599.1">
    <property type="nucleotide sequence ID" value="XM_047418643.1"/>
</dbReference>
<dbReference type="RefSeq" id="XP_054184438.1">
    <property type="nucleotide sequence ID" value="XM_054328463.1"/>
</dbReference>
<dbReference type="RefSeq" id="XP_054184439.1">
    <property type="nucleotide sequence ID" value="XM_054328464.1"/>
</dbReference>
<dbReference type="RefSeq" id="XP_054184440.1">
    <property type="nucleotide sequence ID" value="XM_054328465.1"/>
</dbReference>
<dbReference type="RefSeq" id="XP_054184441.1">
    <property type="nucleotide sequence ID" value="XM_054328466.1"/>
</dbReference>
<dbReference type="RefSeq" id="XP_054184442.1">
    <property type="nucleotide sequence ID" value="XM_054328467.1"/>
</dbReference>
<dbReference type="RefSeq" id="XP_054185740.1">
    <property type="nucleotide sequence ID" value="XM_054329765.1"/>
</dbReference>
<dbReference type="RefSeq" id="XP_054185741.1">
    <property type="nucleotide sequence ID" value="XM_054329766.1"/>
</dbReference>
<dbReference type="RefSeq" id="XP_054185742.1">
    <property type="nucleotide sequence ID" value="XM_054329767.1"/>
</dbReference>
<dbReference type="RefSeq" id="XP_054185743.1">
    <property type="nucleotide sequence ID" value="XM_054329768.1"/>
</dbReference>
<dbReference type="RefSeq" id="XP_054185744.1">
    <property type="nucleotide sequence ID" value="XM_054329769.1"/>
</dbReference>
<dbReference type="RefSeq" id="XP_054186228.1">
    <property type="nucleotide sequence ID" value="XM_054330253.1"/>
</dbReference>
<dbReference type="RefSeq" id="XP_054186229.1">
    <property type="nucleotide sequence ID" value="XM_054330254.1"/>
</dbReference>
<dbReference type="RefSeq" id="XP_054186230.1">
    <property type="nucleotide sequence ID" value="XM_054330255.1"/>
</dbReference>
<dbReference type="RefSeq" id="XP_054186231.1">
    <property type="nucleotide sequence ID" value="XM_054330256.1"/>
</dbReference>
<dbReference type="RefSeq" id="XP_054186232.1">
    <property type="nucleotide sequence ID" value="XM_054330257.1"/>
</dbReference>
<dbReference type="RefSeq" id="XP_054186520.1">
    <property type="nucleotide sequence ID" value="XM_054330545.1"/>
</dbReference>
<dbReference type="RefSeq" id="XP_054186521.1">
    <property type="nucleotide sequence ID" value="XM_054330546.1"/>
</dbReference>
<dbReference type="RefSeq" id="XP_054186522.1">
    <property type="nucleotide sequence ID" value="XM_054330547.1"/>
</dbReference>
<dbReference type="RefSeq" id="XP_054186523.1">
    <property type="nucleotide sequence ID" value="XM_054330548.1"/>
</dbReference>
<dbReference type="RefSeq" id="XP_054186524.1">
    <property type="nucleotide sequence ID" value="XM_054330549.1"/>
</dbReference>
<dbReference type="RefSeq" id="XP_054186525.1">
    <property type="nucleotide sequence ID" value="XM_054330550.1"/>
</dbReference>
<dbReference type="RefSeq" id="XP_054186770.1">
    <property type="nucleotide sequence ID" value="XM_054330795.1"/>
</dbReference>
<dbReference type="RefSeq" id="XP_054186771.1">
    <property type="nucleotide sequence ID" value="XM_054330796.1"/>
</dbReference>
<dbReference type="RefSeq" id="XP_054186772.1">
    <property type="nucleotide sequence ID" value="XM_054330797.1"/>
</dbReference>
<dbReference type="RefSeq" id="XP_054186773.1">
    <property type="nucleotide sequence ID" value="XM_054330798.1"/>
</dbReference>
<dbReference type="RefSeq" id="XP_054186774.1">
    <property type="nucleotide sequence ID" value="XM_054330799.1"/>
</dbReference>
<dbReference type="RefSeq" id="XP_054187008.1">
    <property type="nucleotide sequence ID" value="XM_054331033.1"/>
</dbReference>
<dbReference type="RefSeq" id="XP_054187009.1">
    <property type="nucleotide sequence ID" value="XM_054331034.1"/>
</dbReference>
<dbReference type="RefSeq" id="XP_054187010.1">
    <property type="nucleotide sequence ID" value="XM_054331035.1"/>
</dbReference>
<dbReference type="RefSeq" id="XP_054187011.1">
    <property type="nucleotide sequence ID" value="XM_054331036.1"/>
</dbReference>
<dbReference type="RefSeq" id="XP_054187270.1">
    <property type="nucleotide sequence ID" value="XM_054331295.1"/>
</dbReference>
<dbReference type="RefSeq" id="XP_054187271.1">
    <property type="nucleotide sequence ID" value="XM_054331296.1"/>
</dbReference>
<dbReference type="RefSeq" id="XP_054187272.1">
    <property type="nucleotide sequence ID" value="XM_054331297.1"/>
</dbReference>
<dbReference type="RefSeq" id="XP_054187273.1">
    <property type="nucleotide sequence ID" value="XM_054331298.1"/>
</dbReference>
<dbReference type="RefSeq" id="XP_054187274.1">
    <property type="nucleotide sequence ID" value="XM_054331299.1"/>
</dbReference>
<dbReference type="RefSeq" id="XP_054211137.1">
    <property type="nucleotide sequence ID" value="XM_054355162.1"/>
</dbReference>
<dbReference type="RefSeq" id="XP_054211138.1">
    <property type="nucleotide sequence ID" value="XM_054355163.1"/>
</dbReference>
<dbReference type="RefSeq" id="XP_054211139.1">
    <property type="nucleotide sequence ID" value="XM_054355164.1"/>
</dbReference>
<dbReference type="RefSeq" id="XP_054211140.1">
    <property type="nucleotide sequence ID" value="XM_054355165.1"/>
</dbReference>
<dbReference type="RefSeq" id="XP_054211141.1">
    <property type="nucleotide sequence ID" value="XM_054355166.1"/>
</dbReference>
<dbReference type="RefSeq" id="XP_054211142.1">
    <property type="nucleotide sequence ID" value="XM_054355167.1"/>
</dbReference>
<dbReference type="SMR" id="Q9GZK4"/>
<dbReference type="BioGRID" id="117800">
    <property type="interactions" value="1"/>
</dbReference>
<dbReference type="FunCoup" id="Q9GZK4">
    <property type="interactions" value="458"/>
</dbReference>
<dbReference type="IntAct" id="Q9GZK4">
    <property type="interactions" value="1"/>
</dbReference>
<dbReference type="STRING" id="9606.ENSP00000366340"/>
<dbReference type="GlyCosmos" id="Q9GZK4">
    <property type="glycosylation" value="1 site, No reported glycans"/>
</dbReference>
<dbReference type="GlyGen" id="Q9GZK4">
    <property type="glycosylation" value="1 site"/>
</dbReference>
<dbReference type="BioMuta" id="OR2H1"/>
<dbReference type="DMDM" id="14423801"/>
<dbReference type="PaxDb" id="9606-ENSP00000366340"/>
<dbReference type="ABCD" id="Q9GZK4">
    <property type="antibodies" value="1 sequenced antibody"/>
</dbReference>
<dbReference type="Antibodypedia" id="25966">
    <property type="antibodies" value="74 antibodies from 18 providers"/>
</dbReference>
<dbReference type="DNASU" id="26716"/>
<dbReference type="Ensembl" id="ENST00000377132.1">
    <property type="protein sequence ID" value="ENSP00000366336.1"/>
    <property type="gene ID" value="ENSG00000204688.10"/>
</dbReference>
<dbReference type="Ensembl" id="ENST00000377133.6">
    <property type="protein sequence ID" value="ENSP00000366337.1"/>
    <property type="gene ID" value="ENSG00000204688.10"/>
</dbReference>
<dbReference type="Ensembl" id="ENST00000377136.5">
    <property type="protein sequence ID" value="ENSP00000366340.1"/>
    <property type="gene ID" value="ENSG00000204688.10"/>
</dbReference>
<dbReference type="Ensembl" id="ENST00000383550.3">
    <property type="protein sequence ID" value="ENSP00000373042.3"/>
    <property type="gene ID" value="ENSG00000206471.10"/>
</dbReference>
<dbReference type="Ensembl" id="ENST00000383644.2">
    <property type="protein sequence ID" value="ENSP00000373140.2"/>
    <property type="gene ID" value="ENSG00000206516.10"/>
</dbReference>
<dbReference type="Ensembl" id="ENST00000396792.2">
    <property type="protein sequence ID" value="ENSP00000380010.2"/>
    <property type="gene ID" value="ENSG00000204688.10"/>
</dbReference>
<dbReference type="Ensembl" id="ENST00000400689.1">
    <property type="protein sequence ID" value="ENSP00000383527.1"/>
    <property type="gene ID" value="ENSG00000206471.10"/>
</dbReference>
<dbReference type="Ensembl" id="ENST00000400693.6">
    <property type="protein sequence ID" value="ENSP00000383529.2"/>
    <property type="gene ID" value="ENSG00000206471.10"/>
</dbReference>
<dbReference type="Ensembl" id="ENST00000400694.6">
    <property type="protein sequence ID" value="ENSP00000383530.2"/>
    <property type="gene ID" value="ENSG00000206471.10"/>
</dbReference>
<dbReference type="Ensembl" id="ENST00000400712.1">
    <property type="protein sequence ID" value="ENSP00000383547.1"/>
    <property type="gene ID" value="ENSG00000206516.10"/>
</dbReference>
<dbReference type="Ensembl" id="ENST00000400713.5">
    <property type="protein sequence ID" value="ENSP00000383548.1"/>
    <property type="gene ID" value="ENSG00000206516.10"/>
</dbReference>
<dbReference type="Ensembl" id="ENST00000400714.5">
    <property type="protein sequence ID" value="ENSP00000383549.1"/>
    <property type="gene ID" value="ENSG00000206516.10"/>
</dbReference>
<dbReference type="Ensembl" id="ENST00000412956.5">
    <property type="protein sequence ID" value="ENSP00000407739.1"/>
    <property type="gene ID" value="ENSG00000232984.8"/>
</dbReference>
<dbReference type="Ensembl" id="ENST00000415581.1">
    <property type="protein sequence ID" value="ENSP00000396944.1"/>
    <property type="gene ID" value="ENSG00000224395.8"/>
</dbReference>
<dbReference type="Ensembl" id="ENST00000416582.1">
    <property type="protein sequence ID" value="ENSP00000395850.1"/>
    <property type="gene ID" value="ENSG00000229125.8"/>
</dbReference>
<dbReference type="Ensembl" id="ENST00000418376.1">
    <property type="protein sequence ID" value="ENSP00000395567.1"/>
    <property type="gene ID" value="ENSG00000229408.8"/>
</dbReference>
<dbReference type="Ensembl" id="ENST00000421808.1">
    <property type="protein sequence ID" value="ENSP00000410401.1"/>
    <property type="gene ID" value="ENSG00000232984.8"/>
</dbReference>
<dbReference type="Ensembl" id="ENST00000431658.1">
    <property type="protein sequence ID" value="ENSP00000394698.1"/>
    <property type="gene ID" value="ENSG00000232984.8"/>
</dbReference>
<dbReference type="Ensembl" id="ENST00000435958.5">
    <property type="protein sequence ID" value="ENSP00000397171.1"/>
    <property type="gene ID" value="ENSG00000224395.8"/>
</dbReference>
<dbReference type="Ensembl" id="ENST00000436167.5">
    <property type="protein sequence ID" value="ENSP00000388844.1"/>
    <property type="gene ID" value="ENSG00000235132.8"/>
</dbReference>
<dbReference type="Ensembl" id="ENST00000438840.1">
    <property type="protein sequence ID" value="ENSP00000412463.1"/>
    <property type="gene ID" value="ENSG00000224395.8"/>
</dbReference>
<dbReference type="Ensembl" id="ENST00000439879.5">
    <property type="protein sequence ID" value="ENSP00000409651.1"/>
    <property type="gene ID" value="ENSG00000229408.8"/>
</dbReference>
<dbReference type="Ensembl" id="ENST00000440557.1">
    <property type="protein sequence ID" value="ENSP00000413910.1"/>
    <property type="gene ID" value="ENSG00000229125.8"/>
</dbReference>
<dbReference type="Ensembl" id="ENST00000440672.1">
    <property type="protein sequence ID" value="ENSP00000396414.1"/>
    <property type="gene ID" value="ENSG00000235132.8"/>
</dbReference>
<dbReference type="Ensembl" id="ENST00000443407.5">
    <property type="protein sequence ID" value="ENSP00000398695.1"/>
    <property type="gene ID" value="ENSG00000232984.8"/>
</dbReference>
<dbReference type="Ensembl" id="ENST00000444920.1">
    <property type="protein sequence ID" value="ENSP00000410659.1"/>
    <property type="gene ID" value="ENSG00000235132.8"/>
</dbReference>
<dbReference type="Ensembl" id="ENST00000446161.1">
    <property type="protein sequence ID" value="ENSP00000389230.1"/>
    <property type="gene ID" value="ENSG00000229408.8"/>
</dbReference>
<dbReference type="Ensembl" id="ENST00000449826.5">
    <property type="protein sequence ID" value="ENSP00000411617.1"/>
    <property type="gene ID" value="ENSG00000229408.8"/>
</dbReference>
<dbReference type="Ensembl" id="ENST00000453467.5">
    <property type="protein sequence ID" value="ENSP00000392619.1"/>
    <property type="gene ID" value="ENSG00000229125.8"/>
</dbReference>
<dbReference type="Ensembl" id="ENST00000454071.5">
    <property type="protein sequence ID" value="ENSP00000395934.1"/>
    <property type="gene ID" value="ENSG00000229125.8"/>
</dbReference>
<dbReference type="Ensembl" id="ENST00000456657.5">
    <property type="protein sequence ID" value="ENSP00000408584.1"/>
    <property type="gene ID" value="ENSG00000235132.8"/>
</dbReference>
<dbReference type="Ensembl" id="ENST00000458051.5">
    <property type="protein sequence ID" value="ENSP00000405714.1"/>
    <property type="gene ID" value="ENSG00000224395.8"/>
</dbReference>
<dbReference type="GeneID" id="26716"/>
<dbReference type="KEGG" id="hsa:26716"/>
<dbReference type="MANE-Select" id="ENST00000377133.6">
    <property type="protein sequence ID" value="ENSP00000366337.1"/>
    <property type="RefSeq nucleotide sequence ID" value="NM_030883.5"/>
    <property type="RefSeq protein sequence ID" value="NP_112145.1"/>
</dbReference>
<dbReference type="UCSC" id="uc003nmj.2">
    <property type="organism name" value="human"/>
</dbReference>
<dbReference type="AGR" id="HGNC:8252"/>
<dbReference type="CTD" id="26716"/>
<dbReference type="DisGeNET" id="26716"/>
<dbReference type="GeneCards" id="OR2H1"/>
<dbReference type="HGNC" id="HGNC:8252">
    <property type="gene designation" value="OR2H1"/>
</dbReference>
<dbReference type="HPA" id="ENSG00000204688">
    <property type="expression patterns" value="Tissue enriched (testis)"/>
</dbReference>
<dbReference type="neXtProt" id="NX_Q9GZK4"/>
<dbReference type="OpenTargets" id="ENSG00000204688"/>
<dbReference type="PharmGKB" id="PA32161"/>
<dbReference type="VEuPathDB" id="HostDB:ENSG00000204688"/>
<dbReference type="eggNOG" id="ENOG502TAH4">
    <property type="taxonomic scope" value="Eukaryota"/>
</dbReference>
<dbReference type="GeneTree" id="ENSGT01130000278266"/>
<dbReference type="HOGENOM" id="CLU_012526_1_2_1"/>
<dbReference type="InParanoid" id="Q9GZK4"/>
<dbReference type="OMA" id="CAIAWAV"/>
<dbReference type="OrthoDB" id="9480643at2759"/>
<dbReference type="PAN-GO" id="Q9GZK4">
    <property type="GO annotations" value="0 GO annotations based on evolutionary models"/>
</dbReference>
<dbReference type="PhylomeDB" id="Q9GZK4"/>
<dbReference type="TreeFam" id="TF336512"/>
<dbReference type="PathwayCommons" id="Q9GZK4"/>
<dbReference type="Reactome" id="R-HSA-9752946">
    <property type="pathway name" value="Expression and translocation of olfactory receptors"/>
</dbReference>
<dbReference type="SignaLink" id="Q9GZK4"/>
<dbReference type="BioGRID-ORCS" id="26716">
    <property type="hits" value="11 hits in 740 CRISPR screens"/>
</dbReference>
<dbReference type="GeneWiki" id="OR2H1"/>
<dbReference type="GenomeRNAi" id="26716"/>
<dbReference type="Pharos" id="Q9GZK4">
    <property type="development level" value="Tdark"/>
</dbReference>
<dbReference type="PRO" id="PR:Q9GZK4"/>
<dbReference type="Proteomes" id="UP000005640">
    <property type="component" value="Chromosome 6"/>
</dbReference>
<dbReference type="RNAct" id="Q9GZK4">
    <property type="molecule type" value="protein"/>
</dbReference>
<dbReference type="Bgee" id="ENSG00000204688">
    <property type="expression patterns" value="Expressed in male germ line stem cell (sensu Vertebrata) in testis and 16 other cell types or tissues"/>
</dbReference>
<dbReference type="ExpressionAtlas" id="Q9GZK4">
    <property type="expression patterns" value="baseline and differential"/>
</dbReference>
<dbReference type="GO" id="GO:0005886">
    <property type="term" value="C:plasma membrane"/>
    <property type="evidence" value="ECO:0000318"/>
    <property type="project" value="GO_Central"/>
</dbReference>
<dbReference type="GO" id="GO:0004930">
    <property type="term" value="F:G protein-coupled receptor activity"/>
    <property type="evidence" value="ECO:0007669"/>
    <property type="project" value="UniProtKB-KW"/>
</dbReference>
<dbReference type="GO" id="GO:0004984">
    <property type="term" value="F:olfactory receptor activity"/>
    <property type="evidence" value="ECO:0000318"/>
    <property type="project" value="GO_Central"/>
</dbReference>
<dbReference type="GO" id="GO:0050911">
    <property type="term" value="P:detection of chemical stimulus involved in sensory perception of smell"/>
    <property type="evidence" value="ECO:0000318"/>
    <property type="project" value="GO_Central"/>
</dbReference>
<dbReference type="CDD" id="cd15947">
    <property type="entry name" value="7tmA_OR2B-like"/>
    <property type="match status" value="1"/>
</dbReference>
<dbReference type="FunFam" id="1.20.1070.10:FF:000005">
    <property type="entry name" value="Olfactory receptor"/>
    <property type="match status" value="1"/>
</dbReference>
<dbReference type="Gene3D" id="1.20.1070.10">
    <property type="entry name" value="Rhodopsin 7-helix transmembrane proteins"/>
    <property type="match status" value="1"/>
</dbReference>
<dbReference type="InterPro" id="IPR000276">
    <property type="entry name" value="GPCR_Rhodpsn"/>
</dbReference>
<dbReference type="InterPro" id="IPR017452">
    <property type="entry name" value="GPCR_Rhodpsn_7TM"/>
</dbReference>
<dbReference type="InterPro" id="IPR000725">
    <property type="entry name" value="Olfact_rcpt"/>
</dbReference>
<dbReference type="PANTHER" id="PTHR26453">
    <property type="entry name" value="OLFACTORY RECEPTOR"/>
    <property type="match status" value="1"/>
</dbReference>
<dbReference type="Pfam" id="PF13853">
    <property type="entry name" value="7tm_4"/>
    <property type="match status" value="1"/>
</dbReference>
<dbReference type="PRINTS" id="PR00237">
    <property type="entry name" value="GPCRRHODOPSN"/>
</dbReference>
<dbReference type="PRINTS" id="PR00245">
    <property type="entry name" value="OLFACTORYR"/>
</dbReference>
<dbReference type="SUPFAM" id="SSF81321">
    <property type="entry name" value="Family A G protein-coupled receptor-like"/>
    <property type="match status" value="1"/>
</dbReference>
<dbReference type="PROSITE" id="PS00237">
    <property type="entry name" value="G_PROTEIN_RECEP_F1_1"/>
    <property type="match status" value="1"/>
</dbReference>
<dbReference type="PROSITE" id="PS50262">
    <property type="entry name" value="G_PROTEIN_RECEP_F1_2"/>
    <property type="match status" value="1"/>
</dbReference>
<feature type="chain" id="PRO_0000150479" description="Olfactory receptor 2H1">
    <location>
        <begin position="1"/>
        <end position="316"/>
    </location>
</feature>
<feature type="topological domain" description="Extracellular" evidence="1">
    <location>
        <begin position="1"/>
        <end position="23"/>
    </location>
</feature>
<feature type="transmembrane region" description="Helical; Name=1" evidence="1">
    <location>
        <begin position="24"/>
        <end position="47"/>
    </location>
</feature>
<feature type="topological domain" description="Cytoplasmic" evidence="1">
    <location>
        <begin position="48"/>
        <end position="55"/>
    </location>
</feature>
<feature type="transmembrane region" description="Helical; Name=2" evidence="1">
    <location>
        <begin position="56"/>
        <end position="77"/>
    </location>
</feature>
<feature type="topological domain" description="Extracellular" evidence="1">
    <location>
        <begin position="78"/>
        <end position="98"/>
    </location>
</feature>
<feature type="transmembrane region" description="Helical; Name=3" evidence="1">
    <location>
        <begin position="99"/>
        <end position="118"/>
    </location>
</feature>
<feature type="topological domain" description="Cytoplasmic" evidence="1">
    <location>
        <begin position="119"/>
        <end position="137"/>
    </location>
</feature>
<feature type="transmembrane region" description="Helical; Name=4" evidence="1">
    <location>
        <begin position="138"/>
        <end position="156"/>
    </location>
</feature>
<feature type="topological domain" description="Extracellular" evidence="1">
    <location>
        <begin position="157"/>
        <end position="193"/>
    </location>
</feature>
<feature type="transmembrane region" description="Helical; Name=5" evidence="1">
    <location>
        <begin position="194"/>
        <end position="217"/>
    </location>
</feature>
<feature type="topological domain" description="Cytoplasmic" evidence="1">
    <location>
        <begin position="218"/>
        <end position="234"/>
    </location>
</feature>
<feature type="transmembrane region" description="Helical; Name=6" evidence="1">
    <location>
        <begin position="235"/>
        <end position="257"/>
    </location>
</feature>
<feature type="topological domain" description="Extracellular" evidence="1">
    <location>
        <begin position="258"/>
        <end position="270"/>
    </location>
</feature>
<feature type="transmembrane region" description="Helical; Name=7" evidence="1">
    <location>
        <begin position="271"/>
        <end position="290"/>
    </location>
</feature>
<feature type="topological domain" description="Cytoplasmic" evidence="1">
    <location>
        <begin position="291"/>
        <end position="316"/>
    </location>
</feature>
<feature type="glycosylation site" description="N-linked (GlcNAc...) asparagine" evidence="1">
    <location>
        <position position="3"/>
    </location>
</feature>
<feature type="disulfide bond" evidence="2">
    <location>
        <begin position="95"/>
        <end position="187"/>
    </location>
</feature>
<feature type="sequence variant" id="VAR_010944" description="In allele 6M1-16*02; dbSNP:rs61732185." evidence="3">
    <original>D</original>
    <variation>N</variation>
    <location>
        <position position="63"/>
    </location>
</feature>
<feature type="sequence variant" id="VAR_053143" description="In dbSNP:rs17184086.">
    <original>V</original>
    <variation>M</variation>
    <location>
        <position position="223"/>
    </location>
</feature>
<feature type="sequence conflict" description="In Ref. 8; AAC00188." evidence="4" ref="8">
    <original>T</original>
    <variation>K</variation>
    <location>
        <position position="158"/>
    </location>
</feature>
<feature type="sequence conflict" description="In Ref. 8; AAC00188." evidence="4" ref="8">
    <original>R</original>
    <variation>G</variation>
    <location>
        <position position="184"/>
    </location>
</feature>
<feature type="sequence conflict" description="In Ref. 8; AAC00188." evidence="4" ref="8">
    <original>S</original>
    <variation>Y</variation>
    <location>
        <position position="215"/>
    </location>
</feature>
<name>OR2H1_HUMAN</name>
<organism>
    <name type="scientific">Homo sapiens</name>
    <name type="common">Human</name>
    <dbReference type="NCBI Taxonomy" id="9606"/>
    <lineage>
        <taxon>Eukaryota</taxon>
        <taxon>Metazoa</taxon>
        <taxon>Chordata</taxon>
        <taxon>Craniata</taxon>
        <taxon>Vertebrata</taxon>
        <taxon>Euteleostomi</taxon>
        <taxon>Mammalia</taxon>
        <taxon>Eutheria</taxon>
        <taxon>Euarchontoglires</taxon>
        <taxon>Primates</taxon>
        <taxon>Haplorrhini</taxon>
        <taxon>Catarrhini</taxon>
        <taxon>Hominidae</taxon>
        <taxon>Homo</taxon>
    </lineage>
</organism>
<gene>
    <name type="primary">OR2H1</name>
    <name type="synonym">OR2H6</name>
    <name type="synonym">OR2H8</name>
</gene>
<sequence length="316" mass="35339">MVNQSSPMGFLLLGFSEHPALERTLFVVVFTSYLLTLVGNTLIILLSVLYPRLHSPMYFFLSDLSFLDLCFTTSCVPQMLVNLWGPKKTISFLGCSVQLFIFLSLGTTECILLTVMAFDRYVAVCQPLHYATIIHPRLCWQLASVAWVMSLVQSIVQTPSTLHLPFCPHQQIDDFLCEVPSLIRLSCGDTSYNEIQLAVSSVIFVVVPLSLILASYGATAQAVLRINSATAWRKAFGTCSSHLTVVTLFYSSVIAVYLQPKNPYAQGRGKFFGLFYAVGTPSLNPLVYTLRNKEIKRALRRLLGKERDSRESWRAA</sequence>